<accession>P55216</accession>
<sequence>MATFPHFGTAAIHVGQEPEQWDMNQVVPPISLSSTYKQDNPGEPKGHDYSRAGNPTRDVLQKNLAALEDAKHCQVFSSGLAATSAIINLLKYGDHIVCSDDVYGGTQRYIRRVAVPNHGLEVDSVDLTDVQNLEKAIKPNTKMVWFESPSNPLLKVVDIAAVVQTAKKANPEIVVVVDNTFMSPYFQRPISLGADVVVHSITKYINGHSDVVMGAVITDNDEFQQHLFFMQLAVGAVPSPFDCFLVNRGLKTLHIRMRAHYENALAVAKYLEANDRIESVLYPALPSHPQHEVHEKQTKGMSGMISFYLKGELQESRAFLSALKVFTLAESLGGYESLAELPSIMTHASVPAETRIVLGITDNLIRISVGIEDLDDLVADLDQALKIAIPKV</sequence>
<proteinExistence type="inferred from homology"/>
<gene>
    <name type="primary">cth-2</name>
    <name type="ORF">ZK1127.10</name>
</gene>
<name>CGL2_CAEEL</name>
<protein>
    <recommendedName>
        <fullName>Putative cystathionine gamma-lyase 2</fullName>
        <ecNumber>4.4.1.1</ecNumber>
    </recommendedName>
    <alternativeName>
        <fullName>Gamma-cystathionase</fullName>
    </alternativeName>
</protein>
<evidence type="ECO:0000250" key="1"/>
<evidence type="ECO:0000256" key="2">
    <source>
        <dbReference type="SAM" id="MobiDB-lite"/>
    </source>
</evidence>
<evidence type="ECO:0000305" key="3"/>
<organism>
    <name type="scientific">Caenorhabditis elegans</name>
    <dbReference type="NCBI Taxonomy" id="6239"/>
    <lineage>
        <taxon>Eukaryota</taxon>
        <taxon>Metazoa</taxon>
        <taxon>Ecdysozoa</taxon>
        <taxon>Nematoda</taxon>
        <taxon>Chromadorea</taxon>
        <taxon>Rhabditida</taxon>
        <taxon>Rhabditina</taxon>
        <taxon>Rhabditomorpha</taxon>
        <taxon>Rhabditoidea</taxon>
        <taxon>Rhabditidae</taxon>
        <taxon>Peloderinae</taxon>
        <taxon>Caenorhabditis</taxon>
    </lineage>
</organism>
<reference key="1">
    <citation type="journal article" date="1998" name="Science">
        <title>Genome sequence of the nematode C. elegans: a platform for investigating biology.</title>
        <authorList>
            <consortium name="The C. elegans sequencing consortium"/>
        </authorList>
    </citation>
    <scope>NUCLEOTIDE SEQUENCE [LARGE SCALE GENOMIC DNA]</scope>
    <source>
        <strain>Bristol N2</strain>
    </source>
</reference>
<feature type="chain" id="PRO_0000114753" description="Putative cystathionine gamma-lyase 2">
    <location>
        <begin position="1"/>
        <end position="392"/>
    </location>
</feature>
<feature type="region of interest" description="Disordered" evidence="2">
    <location>
        <begin position="32"/>
        <end position="55"/>
    </location>
</feature>
<feature type="compositionally biased region" description="Basic and acidic residues" evidence="2">
    <location>
        <begin position="40"/>
        <end position="50"/>
    </location>
</feature>
<feature type="binding site" evidence="1">
    <location>
        <position position="51"/>
    </location>
    <ligand>
        <name>substrate</name>
    </ligand>
</feature>
<feature type="binding site" evidence="1">
    <location>
        <position position="103"/>
    </location>
    <ligand>
        <name>substrate</name>
    </ligand>
</feature>
<feature type="binding site" evidence="1">
    <location>
        <position position="108"/>
    </location>
    <ligand>
        <name>substrate</name>
    </ligand>
</feature>
<feature type="binding site" evidence="1">
    <location>
        <position position="330"/>
    </location>
    <ligand>
        <name>substrate</name>
    </ligand>
</feature>
<feature type="modified residue" description="N6-(pyridoxal phosphate)lysine" evidence="1">
    <location>
        <position position="203"/>
    </location>
</feature>
<keyword id="KW-0028">Amino-acid biosynthesis</keyword>
<keyword id="KW-0198">Cysteine biosynthesis</keyword>
<keyword id="KW-0963">Cytoplasm</keyword>
<keyword id="KW-0456">Lyase</keyword>
<keyword id="KW-0663">Pyridoxal phosphate</keyword>
<keyword id="KW-1185">Reference proteome</keyword>
<dbReference type="EC" id="4.4.1.1"/>
<dbReference type="EMBL" id="FO081697">
    <property type="protein sequence ID" value="CCD73724.1"/>
    <property type="molecule type" value="Genomic_DNA"/>
</dbReference>
<dbReference type="PIR" id="C88197">
    <property type="entry name" value="C88197"/>
</dbReference>
<dbReference type="RefSeq" id="NP_495449.1">
    <property type="nucleotide sequence ID" value="NM_063048.8"/>
</dbReference>
<dbReference type="SMR" id="P55216"/>
<dbReference type="BioGRID" id="39492">
    <property type="interactions" value="20"/>
</dbReference>
<dbReference type="FunCoup" id="P55216">
    <property type="interactions" value="1307"/>
</dbReference>
<dbReference type="IntAct" id="P55216">
    <property type="interactions" value="3"/>
</dbReference>
<dbReference type="STRING" id="6239.ZK1127.10.2"/>
<dbReference type="PaxDb" id="6239-ZK1127.10.1"/>
<dbReference type="PeptideAtlas" id="P55216"/>
<dbReference type="EnsemblMetazoa" id="ZK1127.10.1">
    <property type="protein sequence ID" value="ZK1127.10.1"/>
    <property type="gene ID" value="WBGene00022856"/>
</dbReference>
<dbReference type="GeneID" id="174155"/>
<dbReference type="KEGG" id="cel:CELE_ZK1127.10"/>
<dbReference type="UCSC" id="ZK1127.10.1">
    <property type="organism name" value="c. elegans"/>
</dbReference>
<dbReference type="AGR" id="WB:WBGene00022856"/>
<dbReference type="CTD" id="174155"/>
<dbReference type="WormBase" id="ZK1127.10">
    <property type="protein sequence ID" value="CE07648"/>
    <property type="gene ID" value="WBGene00022856"/>
    <property type="gene designation" value="cth-2"/>
</dbReference>
<dbReference type="eggNOG" id="KOG0053">
    <property type="taxonomic scope" value="Eukaryota"/>
</dbReference>
<dbReference type="GeneTree" id="ENSGT00390000000312"/>
<dbReference type="HOGENOM" id="CLU_018986_2_3_1"/>
<dbReference type="InParanoid" id="P55216"/>
<dbReference type="OMA" id="YKQDGVG"/>
<dbReference type="OrthoDB" id="3512640at2759"/>
<dbReference type="PhylomeDB" id="P55216"/>
<dbReference type="Reactome" id="R-CEL-1614558">
    <property type="pathway name" value="Degradation of cysteine and homocysteine"/>
</dbReference>
<dbReference type="Reactome" id="R-CEL-1614603">
    <property type="pathway name" value="Cysteine formation from homocysteine"/>
</dbReference>
<dbReference type="SignaLink" id="P55216"/>
<dbReference type="UniPathway" id="UPA00136">
    <property type="reaction ID" value="UER00202"/>
</dbReference>
<dbReference type="PRO" id="PR:P55216"/>
<dbReference type="Proteomes" id="UP000001940">
    <property type="component" value="Chromosome II"/>
</dbReference>
<dbReference type="Bgee" id="WBGene00022856">
    <property type="expression patterns" value="Expressed in larva and 4 other cell types or tissues"/>
</dbReference>
<dbReference type="GO" id="GO:0005737">
    <property type="term" value="C:cytoplasm"/>
    <property type="evidence" value="ECO:0000318"/>
    <property type="project" value="GO_Central"/>
</dbReference>
<dbReference type="GO" id="GO:0005783">
    <property type="term" value="C:endoplasmic reticulum"/>
    <property type="evidence" value="ECO:0007005"/>
    <property type="project" value="WormBase"/>
</dbReference>
<dbReference type="GO" id="GO:0004123">
    <property type="term" value="F:cystathionine gamma-lyase activity"/>
    <property type="evidence" value="ECO:0000318"/>
    <property type="project" value="GO_Central"/>
</dbReference>
<dbReference type="GO" id="GO:0030170">
    <property type="term" value="F:pyridoxal phosphate binding"/>
    <property type="evidence" value="ECO:0000318"/>
    <property type="project" value="GO_Central"/>
</dbReference>
<dbReference type="GO" id="GO:0019343">
    <property type="term" value="P:cysteine biosynthetic process via cystathionine"/>
    <property type="evidence" value="ECO:0000318"/>
    <property type="project" value="GO_Central"/>
</dbReference>
<dbReference type="GO" id="GO:0019346">
    <property type="term" value="P:transsulfuration"/>
    <property type="evidence" value="ECO:0000318"/>
    <property type="project" value="GO_Central"/>
</dbReference>
<dbReference type="CDD" id="cd00614">
    <property type="entry name" value="CGS_like"/>
    <property type="match status" value="1"/>
</dbReference>
<dbReference type="FunFam" id="3.90.1150.10:FF:000008">
    <property type="entry name" value="Cystathionine gamma-synthase"/>
    <property type="match status" value="1"/>
</dbReference>
<dbReference type="FunFam" id="3.40.640.10:FF:000009">
    <property type="entry name" value="Cystathionine gamma-synthase homolog"/>
    <property type="match status" value="1"/>
</dbReference>
<dbReference type="Gene3D" id="3.90.1150.10">
    <property type="entry name" value="Aspartate Aminotransferase, domain 1"/>
    <property type="match status" value="1"/>
</dbReference>
<dbReference type="Gene3D" id="3.40.640.10">
    <property type="entry name" value="Type I PLP-dependent aspartate aminotransferase-like (Major domain)"/>
    <property type="match status" value="1"/>
</dbReference>
<dbReference type="InterPro" id="IPR000277">
    <property type="entry name" value="Cys/Met-Metab_PyrdxlP-dep_enz"/>
</dbReference>
<dbReference type="InterPro" id="IPR054542">
    <property type="entry name" value="Cys_met_metab_PP"/>
</dbReference>
<dbReference type="InterPro" id="IPR015424">
    <property type="entry name" value="PyrdxlP-dep_Trfase"/>
</dbReference>
<dbReference type="InterPro" id="IPR015421">
    <property type="entry name" value="PyrdxlP-dep_Trfase_major"/>
</dbReference>
<dbReference type="InterPro" id="IPR015422">
    <property type="entry name" value="PyrdxlP-dep_Trfase_small"/>
</dbReference>
<dbReference type="PANTHER" id="PTHR11808:SF15">
    <property type="entry name" value="CYSTATHIONINE GAMMA-LYASE"/>
    <property type="match status" value="1"/>
</dbReference>
<dbReference type="PANTHER" id="PTHR11808">
    <property type="entry name" value="TRANS-SULFURATION ENZYME FAMILY MEMBER"/>
    <property type="match status" value="1"/>
</dbReference>
<dbReference type="Pfam" id="PF01053">
    <property type="entry name" value="Cys_Met_Meta_PP"/>
    <property type="match status" value="1"/>
</dbReference>
<dbReference type="PIRSF" id="PIRSF001434">
    <property type="entry name" value="CGS"/>
    <property type="match status" value="1"/>
</dbReference>
<dbReference type="SUPFAM" id="SSF53383">
    <property type="entry name" value="PLP-dependent transferases"/>
    <property type="match status" value="1"/>
</dbReference>
<dbReference type="PROSITE" id="PS00868">
    <property type="entry name" value="CYS_MET_METAB_PP"/>
    <property type="match status" value="1"/>
</dbReference>
<comment type="catalytic activity">
    <reaction>
        <text>L,L-cystathionine + H2O = 2-oxobutanoate + L-cysteine + NH4(+)</text>
        <dbReference type="Rhea" id="RHEA:14005"/>
        <dbReference type="ChEBI" id="CHEBI:15377"/>
        <dbReference type="ChEBI" id="CHEBI:16763"/>
        <dbReference type="ChEBI" id="CHEBI:28938"/>
        <dbReference type="ChEBI" id="CHEBI:35235"/>
        <dbReference type="ChEBI" id="CHEBI:58161"/>
        <dbReference type="EC" id="4.4.1.1"/>
    </reaction>
</comment>
<comment type="cofactor">
    <cofactor evidence="1">
        <name>pyridoxal 5'-phosphate</name>
        <dbReference type="ChEBI" id="CHEBI:597326"/>
    </cofactor>
</comment>
<comment type="pathway">
    <text>Amino-acid biosynthesis; L-cysteine biosynthesis; L-cysteine from L-homocysteine and L-serine: step 2/2.</text>
</comment>
<comment type="subcellular location">
    <subcellularLocation>
        <location evidence="1">Cytoplasm</location>
    </subcellularLocation>
</comment>
<comment type="similarity">
    <text evidence="3">Belongs to the trans-sulfuration enzymes family.</text>
</comment>